<accession>Q5UNU0</accession>
<sequence>MTTFDLDDFLKSYKPKKVDLSSYTNHTKLKGYTYITKDDFNNLIPNRTYIKYILRSDVGTENNISKQIHCGGFFLSGGNFSGKKFVQSDDWITWTHLFLKYCPHPESNLNGEFTEHKFYLKTTKYYLFYRYYDKKSDIYNLKSIKLKKIKKLKKNSDSKSMKKTH</sequence>
<name>YL676_MIMIV</name>
<organism>
    <name type="scientific">Acanthamoeba polyphaga mimivirus</name>
    <name type="common">APMV</name>
    <dbReference type="NCBI Taxonomy" id="212035"/>
    <lineage>
        <taxon>Viruses</taxon>
        <taxon>Varidnaviria</taxon>
        <taxon>Bamfordvirae</taxon>
        <taxon>Nucleocytoviricota</taxon>
        <taxon>Megaviricetes</taxon>
        <taxon>Imitervirales</taxon>
        <taxon>Mimiviridae</taxon>
        <taxon>Megamimivirinae</taxon>
        <taxon>Mimivirus</taxon>
        <taxon>Mimivirus bradfordmassiliense</taxon>
    </lineage>
</organism>
<protein>
    <recommendedName>
        <fullName>Uncharacterized protein L676</fullName>
    </recommendedName>
</protein>
<reference key="1">
    <citation type="journal article" date="2004" name="Science">
        <title>The 1.2-megabase genome sequence of Mimivirus.</title>
        <authorList>
            <person name="Raoult D."/>
            <person name="Audic S."/>
            <person name="Robert C."/>
            <person name="Abergel C."/>
            <person name="Renesto P."/>
            <person name="Ogata H."/>
            <person name="La Scola B."/>
            <person name="Susan M."/>
            <person name="Claverie J.-M."/>
        </authorList>
    </citation>
    <scope>NUCLEOTIDE SEQUENCE [LARGE SCALE GENOMIC DNA]</scope>
    <source>
        <strain>Rowbotham-Bradford</strain>
    </source>
</reference>
<feature type="chain" id="PRO_0000071310" description="Uncharacterized protein L676">
    <location>
        <begin position="1"/>
        <end position="165"/>
    </location>
</feature>
<keyword id="KW-1185">Reference proteome</keyword>
<organismHost>
    <name type="scientific">Acanthamoeba polyphaga</name>
    <name type="common">Amoeba</name>
    <dbReference type="NCBI Taxonomy" id="5757"/>
</organismHost>
<dbReference type="EMBL" id="AY653733">
    <property type="protein sequence ID" value="AAV50937.1"/>
    <property type="molecule type" value="Genomic_DNA"/>
</dbReference>
<dbReference type="KEGG" id="vg:9925323"/>
<dbReference type="OrthoDB" id="26759at10239"/>
<dbReference type="Proteomes" id="UP000001134">
    <property type="component" value="Genome"/>
</dbReference>
<gene>
    <name type="ordered locus">MIMI_L676</name>
</gene>
<proteinExistence type="predicted"/>